<proteinExistence type="evidence at transcript level"/>
<sequence length="109" mass="12112">MAAGVVFLALSAQLLQARLMKEESPVVSWRLEPEDGTALDVHFVSTLEPLSNAVKRNVPRCIIILVLQEPTPFRISVTSSCFVQNTLTKLLKDRRKMQTVQCATAQETS</sequence>
<protein>
    <recommendedName>
        <fullName>B melanoma antigen 3</fullName>
    </recommendedName>
    <alternativeName>
        <fullName>Cancer/testis antigen 2.3</fullName>
        <shortName>CT2.3</shortName>
    </alternativeName>
</protein>
<comment type="function">
    <text>Unknown. Candidate gene encoding tumor antigens.</text>
</comment>
<comment type="subcellular location">
    <subcellularLocation>
        <location evidence="3">Secreted</location>
    </subcellularLocation>
</comment>
<comment type="tissue specificity">
    <text>Not expressed in normal tissues except in testis. Expressed in melanoma, bladder and lung carcinomas.</text>
</comment>
<comment type="miscellaneous">
    <text>The ancestral BAGE gene was generated by juxtacentromeric reshuffling of the KMT2C/MLL3 gene. The BAGE family was expanded by juxtacentromeric movement and/or acrocentric exchanges. BAGE family is composed of expressed genes that map to the juxtacentromeric regions of chromosomes 13 and 21 and of unexpressed gene fragments that scattered in the juxtacentromeric regions of several chromosomes, including chromosomes 9, 13, 18 and 21.</text>
</comment>
<comment type="similarity">
    <text evidence="3">Belongs to the BAGE family.</text>
</comment>
<organism>
    <name type="scientific">Homo sapiens</name>
    <name type="common">Human</name>
    <dbReference type="NCBI Taxonomy" id="9606"/>
    <lineage>
        <taxon>Eukaryota</taxon>
        <taxon>Metazoa</taxon>
        <taxon>Chordata</taxon>
        <taxon>Craniata</taxon>
        <taxon>Vertebrata</taxon>
        <taxon>Euteleostomi</taxon>
        <taxon>Mammalia</taxon>
        <taxon>Eutheria</taxon>
        <taxon>Euarchontoglires</taxon>
        <taxon>Primates</taxon>
        <taxon>Haplorrhini</taxon>
        <taxon>Catarrhini</taxon>
        <taxon>Hominidae</taxon>
        <taxon>Homo</taxon>
    </lineage>
</organism>
<accession>Q86Y29</accession>
<feature type="signal peptide" evidence="1">
    <location>
        <begin position="1"/>
        <end position="17"/>
    </location>
</feature>
<feature type="chain" id="PRO_0000020776" description="B melanoma antigen 3">
    <location>
        <begin position="18"/>
        <end position="109"/>
    </location>
</feature>
<feature type="sequence variant" id="VAR_059587" description="In dbSNP:rs2740327.">
    <original>R</original>
    <variation>T</variation>
    <location>
        <position position="95"/>
    </location>
</feature>
<feature type="sequence variant" id="VAR_059588" description="In dbSNP:rs9808647." evidence="2">
    <original>Q</original>
    <variation>R</variation>
    <location>
        <position position="106"/>
    </location>
</feature>
<feature type="sequence conflict" description="In Ref. 3; AAI01135." evidence="3" ref="3">
    <original>P</original>
    <variation>A</variation>
    <location>
        <position position="72"/>
    </location>
</feature>
<name>BAGE3_HUMAN</name>
<reference key="1">
    <citation type="journal article" date="2002" name="Eur. J. Hum. Genet.">
        <title>New BAGE (B melanoma antigen) genes mapping to the juxtacentromeric regions of human chromosomes 13 and 21 have a cancer/testis expression profile.</title>
        <authorList>
            <person name="Ruault M."/>
            <person name="van der Bruggen P."/>
            <person name="Brun M.-E."/>
            <person name="Boyle S."/>
            <person name="Roizes G."/>
            <person name="De Sario A."/>
        </authorList>
    </citation>
    <scope>NUCLEOTIDE SEQUENCE [MRNA]</scope>
</reference>
<reference key="2">
    <citation type="journal article" date="2003" name="Genomics">
        <title>BAGE genes generated by juxtacentromeric reshuffling in the hominidae lineage are under selective pressure.</title>
        <authorList>
            <person name="Ruault M."/>
            <person name="Ventura M."/>
            <person name="Galtier N."/>
            <person name="Brun M.-E."/>
            <person name="Archidiacono N."/>
            <person name="Roizes G."/>
            <person name="De Sario A."/>
        </authorList>
    </citation>
    <scope>NUCLEOTIDE SEQUENCE [MRNA]</scope>
</reference>
<reference key="3">
    <citation type="journal article" date="2004" name="Genome Res.">
        <title>The status, quality, and expansion of the NIH full-length cDNA project: the Mammalian Gene Collection (MGC).</title>
        <authorList>
            <consortium name="The MGC Project Team"/>
        </authorList>
    </citation>
    <scope>NUCLEOTIDE SEQUENCE [LARGE SCALE MRNA]</scope>
    <scope>VARIANT ARG-106</scope>
</reference>
<gene>
    <name type="primary">BAGE3</name>
</gene>
<keyword id="KW-1185">Reference proteome</keyword>
<keyword id="KW-0964">Secreted</keyword>
<keyword id="KW-0732">Signal</keyword>
<dbReference type="EMBL" id="AF339514">
    <property type="protein sequence ID" value="AAO32634.1"/>
    <property type="molecule type" value="mRNA"/>
</dbReference>
<dbReference type="EMBL" id="BC101134">
    <property type="protein sequence ID" value="AAI01135.1"/>
    <property type="molecule type" value="mRNA"/>
</dbReference>
<dbReference type="RefSeq" id="NP_872287.1">
    <property type="nucleotide sequence ID" value="NM_182481.1"/>
</dbReference>
<dbReference type="BioMuta" id="HGNC:15728"/>
<dbReference type="MassIVE" id="Q86Y29"/>
<dbReference type="DNASU" id="85318"/>
<dbReference type="GeneID" id="85318"/>
<dbReference type="KEGG" id="hsa:85318"/>
<dbReference type="AGR" id="HGNC:15728"/>
<dbReference type="CTD" id="85318"/>
<dbReference type="GeneCards" id="BAGE3"/>
<dbReference type="HGNC" id="HGNC:15728">
    <property type="gene designation" value="BAGE3"/>
</dbReference>
<dbReference type="MIM" id="617777">
    <property type="type" value="gene"/>
</dbReference>
<dbReference type="neXtProt" id="NX_Q86Y29"/>
<dbReference type="PharmGKB" id="PA25244"/>
<dbReference type="InParanoid" id="Q86Y29"/>
<dbReference type="PathwayCommons" id="Q86Y29"/>
<dbReference type="BioGRID-ORCS" id="85318">
    <property type="hits" value="2 hits in 110 CRISPR screens"/>
</dbReference>
<dbReference type="GenomeRNAi" id="85318"/>
<dbReference type="Pharos" id="Q86Y29">
    <property type="development level" value="Tdark"/>
</dbReference>
<dbReference type="PRO" id="PR:Q86Y29"/>
<dbReference type="Proteomes" id="UP000005640">
    <property type="component" value="Unplaced"/>
</dbReference>
<dbReference type="RNAct" id="Q86Y29">
    <property type="molecule type" value="protein"/>
</dbReference>
<dbReference type="GO" id="GO:0005576">
    <property type="term" value="C:extracellular region"/>
    <property type="evidence" value="ECO:0007669"/>
    <property type="project" value="UniProtKB-SubCell"/>
</dbReference>
<dbReference type="InterPro" id="IPR012530">
    <property type="entry name" value="BAGE-like"/>
</dbReference>
<dbReference type="Pfam" id="PF08180">
    <property type="entry name" value="BAGE"/>
    <property type="match status" value="1"/>
</dbReference>
<evidence type="ECO:0000255" key="1"/>
<evidence type="ECO:0000269" key="2">
    <source>
    </source>
</evidence>
<evidence type="ECO:0000305" key="3"/>